<organism>
    <name type="scientific">Burkholderia pseudomallei (strain 668)</name>
    <dbReference type="NCBI Taxonomy" id="320373"/>
    <lineage>
        <taxon>Bacteria</taxon>
        <taxon>Pseudomonadati</taxon>
        <taxon>Pseudomonadota</taxon>
        <taxon>Betaproteobacteria</taxon>
        <taxon>Burkholderiales</taxon>
        <taxon>Burkholderiaceae</taxon>
        <taxon>Burkholderia</taxon>
        <taxon>pseudomallei group</taxon>
    </lineage>
</organism>
<name>SDHD_BURP6</name>
<comment type="catalytic activity">
    <reaction evidence="1">
        <text>D-serine = pyruvate + NH4(+)</text>
        <dbReference type="Rhea" id="RHEA:13977"/>
        <dbReference type="ChEBI" id="CHEBI:15361"/>
        <dbReference type="ChEBI" id="CHEBI:28938"/>
        <dbReference type="ChEBI" id="CHEBI:35247"/>
        <dbReference type="EC" id="4.3.1.18"/>
    </reaction>
</comment>
<comment type="cofactor">
    <cofactor evidence="1">
        <name>pyridoxal 5'-phosphate</name>
        <dbReference type="ChEBI" id="CHEBI:597326"/>
    </cofactor>
</comment>
<comment type="similarity">
    <text evidence="1">Belongs to the serine/threonine dehydratase family. DsdA subfamily.</text>
</comment>
<protein>
    <recommendedName>
        <fullName evidence="1">Probable D-serine dehydratase</fullName>
        <ecNumber evidence="1">4.3.1.18</ecNumber>
    </recommendedName>
    <alternativeName>
        <fullName evidence="1">D-serine deaminase</fullName>
        <shortName evidence="1">DSD</shortName>
    </alternativeName>
</protein>
<evidence type="ECO:0000255" key="1">
    <source>
        <dbReference type="HAMAP-Rule" id="MF_01030"/>
    </source>
</evidence>
<proteinExistence type="inferred from homology"/>
<feature type="chain" id="PRO_1000063709" description="Probable D-serine dehydratase">
    <location>
        <begin position="1"/>
        <end position="445"/>
    </location>
</feature>
<feature type="modified residue" description="N6-(pyridoxal phosphate)lysine" evidence="1">
    <location>
        <position position="111"/>
    </location>
</feature>
<reference key="1">
    <citation type="journal article" date="2010" name="Genome Biol. Evol.">
        <title>Continuing evolution of Burkholderia mallei through genome reduction and large-scale rearrangements.</title>
        <authorList>
            <person name="Losada L."/>
            <person name="Ronning C.M."/>
            <person name="DeShazer D."/>
            <person name="Woods D."/>
            <person name="Fedorova N."/>
            <person name="Kim H.S."/>
            <person name="Shabalina S.A."/>
            <person name="Pearson T.R."/>
            <person name="Brinkac L."/>
            <person name="Tan P."/>
            <person name="Nandi T."/>
            <person name="Crabtree J."/>
            <person name="Badger J."/>
            <person name="Beckstrom-Sternberg S."/>
            <person name="Saqib M."/>
            <person name="Schutzer S.E."/>
            <person name="Keim P."/>
            <person name="Nierman W.C."/>
        </authorList>
    </citation>
    <scope>NUCLEOTIDE SEQUENCE [LARGE SCALE GENOMIC DNA]</scope>
    <source>
        <strain>668</strain>
    </source>
</reference>
<dbReference type="EC" id="4.3.1.18" evidence="1"/>
<dbReference type="EMBL" id="CP000571">
    <property type="protein sequence ID" value="ABN85823.1"/>
    <property type="molecule type" value="Genomic_DNA"/>
</dbReference>
<dbReference type="RefSeq" id="WP_011853866.1">
    <property type="nucleotide sequence ID" value="NC_009075.1"/>
</dbReference>
<dbReference type="SMR" id="A3NNQ0"/>
<dbReference type="KEGG" id="bpd:BURPS668_A2980"/>
<dbReference type="HOGENOM" id="CLU_035707_0_0_4"/>
<dbReference type="GO" id="GO:0008721">
    <property type="term" value="F:D-serine ammonia-lyase activity"/>
    <property type="evidence" value="ECO:0007669"/>
    <property type="project" value="UniProtKB-EC"/>
</dbReference>
<dbReference type="GO" id="GO:0016836">
    <property type="term" value="F:hydro-lyase activity"/>
    <property type="evidence" value="ECO:0007669"/>
    <property type="project" value="UniProtKB-UniRule"/>
</dbReference>
<dbReference type="GO" id="GO:0030170">
    <property type="term" value="F:pyridoxal phosphate binding"/>
    <property type="evidence" value="ECO:0007669"/>
    <property type="project" value="InterPro"/>
</dbReference>
<dbReference type="GO" id="GO:0036088">
    <property type="term" value="P:D-serine catabolic process"/>
    <property type="evidence" value="ECO:0007669"/>
    <property type="project" value="TreeGrafter"/>
</dbReference>
<dbReference type="GO" id="GO:0009097">
    <property type="term" value="P:isoleucine biosynthetic process"/>
    <property type="evidence" value="ECO:0007669"/>
    <property type="project" value="TreeGrafter"/>
</dbReference>
<dbReference type="Gene3D" id="3.40.50.1100">
    <property type="match status" value="2"/>
</dbReference>
<dbReference type="HAMAP" id="MF_01030">
    <property type="entry name" value="D_Ser_dehydrat"/>
    <property type="match status" value="1"/>
</dbReference>
<dbReference type="InterPro" id="IPR011780">
    <property type="entry name" value="D_Ser_am_lyase"/>
</dbReference>
<dbReference type="InterPro" id="IPR050147">
    <property type="entry name" value="Ser/Thr_Dehydratase"/>
</dbReference>
<dbReference type="InterPro" id="IPR001926">
    <property type="entry name" value="TrpB-like_PALP"/>
</dbReference>
<dbReference type="InterPro" id="IPR036052">
    <property type="entry name" value="TrpB-like_PALP_sf"/>
</dbReference>
<dbReference type="NCBIfam" id="TIGR02035">
    <property type="entry name" value="D_Ser_am_lyase"/>
    <property type="match status" value="1"/>
</dbReference>
<dbReference type="NCBIfam" id="NF002823">
    <property type="entry name" value="PRK02991.1"/>
    <property type="match status" value="1"/>
</dbReference>
<dbReference type="PANTHER" id="PTHR48078:SF9">
    <property type="entry name" value="D-SERINE DEHYDRATASE"/>
    <property type="match status" value="1"/>
</dbReference>
<dbReference type="PANTHER" id="PTHR48078">
    <property type="entry name" value="THREONINE DEHYDRATASE, MITOCHONDRIAL-RELATED"/>
    <property type="match status" value="1"/>
</dbReference>
<dbReference type="Pfam" id="PF00291">
    <property type="entry name" value="PALP"/>
    <property type="match status" value="1"/>
</dbReference>
<dbReference type="SUPFAM" id="SSF53686">
    <property type="entry name" value="Tryptophan synthase beta subunit-like PLP-dependent enzymes"/>
    <property type="match status" value="1"/>
</dbReference>
<accession>A3NNQ0</accession>
<keyword id="KW-0456">Lyase</keyword>
<keyword id="KW-0663">Pyridoxal phosphate</keyword>
<gene>
    <name evidence="1" type="primary">dsdA</name>
    <name type="ordered locus">BURPS668_A2980</name>
</gene>
<sequence>MPVGRSLSLDPNLLAQLQSHSPTLWLNPHQGMPLPDFAPTAADLADADARLRRCAGLLAELFAELRLSGGLIASPLQPAEPLKRAARAGHAQAGAWYVKRDDALPVAGSIKARGGFHEVLALAESIAERHGLAGADTDRRALASGAARARFARHTVMVGSTGNLGLSIGMLASALGFRTVVHMSADAKAWKKARLRTRGVEVVEHAGDYAKAVDAGRRQAAGMPCCHFVDDEGSRMLFLGYATAAAELAAQLAQAGRPVDARHPLFVHLPCGVGGAPGGIVYGLKALYGEHVHAFVAEPTASPCVLVQLAGDAAHPRSVYDIGLDNRTEADGLAVAQASPLAAALLRAQAAGAFTVDDRQLFAHLLDARERLGIDLEPSAAAAFGGPAWIAGSDAGRAYLRGRGIDPDAATHVIWATGGSLVPAQEHRRFQAHARAQRQVGGAGA</sequence>